<accession>Q112R6</accession>
<feature type="chain" id="PRO_1000015592" description="33 kDa chaperonin">
    <location>
        <begin position="1"/>
        <end position="311"/>
    </location>
</feature>
<feature type="disulfide bond" description="Redox-active" evidence="1">
    <location>
        <begin position="240"/>
        <end position="242"/>
    </location>
</feature>
<feature type="disulfide bond" description="Redox-active" evidence="1">
    <location>
        <begin position="273"/>
        <end position="276"/>
    </location>
</feature>
<gene>
    <name evidence="1" type="primary">hslO</name>
    <name type="ordered locus">Tery_2283</name>
</gene>
<keyword id="KW-0143">Chaperone</keyword>
<keyword id="KW-0963">Cytoplasm</keyword>
<keyword id="KW-1015">Disulfide bond</keyword>
<keyword id="KW-0676">Redox-active center</keyword>
<keyword id="KW-0862">Zinc</keyword>
<evidence type="ECO:0000255" key="1">
    <source>
        <dbReference type="HAMAP-Rule" id="MF_00117"/>
    </source>
</evidence>
<proteinExistence type="inferred from homology"/>
<sequence>MADQLIRAMAAEGGIRAVGVITTRLTEEARQRHKLSWVASVVLGRTMAAGLLLASSMKTPESRVNIRVQGNGPLGEVLVDAGLDGTVRGYVNNPTIELLPNKIGKHDIGKAVGNQGYLYIVRDIGYGYPYSGTVELVSGEIGDDITHYLAKSEQTPSALVLGVFVDKEGVQTAGGILLQVMPKVAIDEELVQVLESRIASLSGFTSLLHSGKTLPEIFQELLGDMGLNILPEAQIVRFKCDCSMEKVLRALRMFGVDELQNMIEEDKGAEVTCEFCSQLYQASPKELTQIIQDLQQPSTEVPLGQLRRSSH</sequence>
<name>HSLO_TRIEI</name>
<organism>
    <name type="scientific">Trichodesmium erythraeum (strain IMS101)</name>
    <dbReference type="NCBI Taxonomy" id="203124"/>
    <lineage>
        <taxon>Bacteria</taxon>
        <taxon>Bacillati</taxon>
        <taxon>Cyanobacteriota</taxon>
        <taxon>Cyanophyceae</taxon>
        <taxon>Oscillatoriophycideae</taxon>
        <taxon>Oscillatoriales</taxon>
        <taxon>Microcoleaceae</taxon>
        <taxon>Trichodesmium</taxon>
    </lineage>
</organism>
<protein>
    <recommendedName>
        <fullName evidence="1">33 kDa chaperonin</fullName>
    </recommendedName>
    <alternativeName>
        <fullName evidence="1">Heat shock protein 33 homolog</fullName>
        <shortName evidence="1">HSP33</shortName>
    </alternativeName>
</protein>
<dbReference type="EMBL" id="CP000393">
    <property type="protein sequence ID" value="ABG51508.1"/>
    <property type="molecule type" value="Genomic_DNA"/>
</dbReference>
<dbReference type="RefSeq" id="WP_011611876.1">
    <property type="nucleotide sequence ID" value="NC_008312.1"/>
</dbReference>
<dbReference type="SMR" id="Q112R6"/>
<dbReference type="STRING" id="203124.Tery_2283"/>
<dbReference type="KEGG" id="ter:Tery_2283"/>
<dbReference type="eggNOG" id="COG1281">
    <property type="taxonomic scope" value="Bacteria"/>
</dbReference>
<dbReference type="HOGENOM" id="CLU_054493_1_0_3"/>
<dbReference type="OrthoDB" id="9776534at2"/>
<dbReference type="GO" id="GO:0005737">
    <property type="term" value="C:cytoplasm"/>
    <property type="evidence" value="ECO:0007669"/>
    <property type="project" value="UniProtKB-SubCell"/>
</dbReference>
<dbReference type="GO" id="GO:0044183">
    <property type="term" value="F:protein folding chaperone"/>
    <property type="evidence" value="ECO:0007669"/>
    <property type="project" value="TreeGrafter"/>
</dbReference>
<dbReference type="GO" id="GO:0051082">
    <property type="term" value="F:unfolded protein binding"/>
    <property type="evidence" value="ECO:0007669"/>
    <property type="project" value="UniProtKB-UniRule"/>
</dbReference>
<dbReference type="GO" id="GO:0042026">
    <property type="term" value="P:protein refolding"/>
    <property type="evidence" value="ECO:0007669"/>
    <property type="project" value="TreeGrafter"/>
</dbReference>
<dbReference type="CDD" id="cd00498">
    <property type="entry name" value="Hsp33"/>
    <property type="match status" value="1"/>
</dbReference>
<dbReference type="Gene3D" id="3.55.30.10">
    <property type="entry name" value="Hsp33 domain"/>
    <property type="match status" value="1"/>
</dbReference>
<dbReference type="Gene3D" id="3.90.1280.10">
    <property type="entry name" value="HSP33 redox switch-like"/>
    <property type="match status" value="1"/>
</dbReference>
<dbReference type="HAMAP" id="MF_00117">
    <property type="entry name" value="HslO"/>
    <property type="match status" value="1"/>
</dbReference>
<dbReference type="InterPro" id="IPR000397">
    <property type="entry name" value="Heat_shock_Hsp33"/>
</dbReference>
<dbReference type="InterPro" id="IPR016154">
    <property type="entry name" value="Heat_shock_Hsp33_C"/>
</dbReference>
<dbReference type="InterPro" id="IPR016153">
    <property type="entry name" value="Heat_shock_Hsp33_N"/>
</dbReference>
<dbReference type="NCBIfam" id="NF001033">
    <property type="entry name" value="PRK00114.1"/>
    <property type="match status" value="1"/>
</dbReference>
<dbReference type="PANTHER" id="PTHR30111">
    <property type="entry name" value="33 KDA CHAPERONIN"/>
    <property type="match status" value="1"/>
</dbReference>
<dbReference type="PANTHER" id="PTHR30111:SF1">
    <property type="entry name" value="33 KDA CHAPERONIN"/>
    <property type="match status" value="1"/>
</dbReference>
<dbReference type="Pfam" id="PF01430">
    <property type="entry name" value="HSP33"/>
    <property type="match status" value="1"/>
</dbReference>
<dbReference type="PIRSF" id="PIRSF005261">
    <property type="entry name" value="Heat_shock_Hsp33"/>
    <property type="match status" value="1"/>
</dbReference>
<dbReference type="SUPFAM" id="SSF64397">
    <property type="entry name" value="Hsp33 domain"/>
    <property type="match status" value="1"/>
</dbReference>
<dbReference type="SUPFAM" id="SSF118352">
    <property type="entry name" value="HSP33 redox switch-like"/>
    <property type="match status" value="1"/>
</dbReference>
<reference key="1">
    <citation type="journal article" date="2015" name="Proc. Natl. Acad. Sci. U.S.A.">
        <title>Trichodesmium genome maintains abundant, widespread noncoding DNA in situ, despite oligotrophic lifestyle.</title>
        <authorList>
            <person name="Walworth N."/>
            <person name="Pfreundt U."/>
            <person name="Nelson W.C."/>
            <person name="Mincer T."/>
            <person name="Heidelberg J.F."/>
            <person name="Fu F."/>
            <person name="Waterbury J.B."/>
            <person name="Glavina del Rio T."/>
            <person name="Goodwin L."/>
            <person name="Kyrpides N.C."/>
            <person name="Land M.L."/>
            <person name="Woyke T."/>
            <person name="Hutchins D.A."/>
            <person name="Hess W.R."/>
            <person name="Webb E.A."/>
        </authorList>
    </citation>
    <scope>NUCLEOTIDE SEQUENCE [LARGE SCALE GENOMIC DNA]</scope>
    <source>
        <strain>IMS101</strain>
    </source>
</reference>
<comment type="function">
    <text evidence="1">Redox regulated molecular chaperone. Protects both thermally unfolding and oxidatively damaged proteins from irreversible aggregation. Plays an important role in the bacterial defense system toward oxidative stress.</text>
</comment>
<comment type="subcellular location">
    <subcellularLocation>
        <location evidence="1">Cytoplasm</location>
    </subcellularLocation>
</comment>
<comment type="PTM">
    <text evidence="1">Under oxidizing conditions two disulfide bonds are formed involving the reactive cysteines. Under reducing conditions zinc is bound to the reactive cysteines and the protein is inactive.</text>
</comment>
<comment type="similarity">
    <text evidence="1">Belongs to the HSP33 family.</text>
</comment>